<dbReference type="EC" id="2.7.3.9" evidence="1 6"/>
<dbReference type="EMBL" id="AE016830">
    <property type="protein sequence ID" value="AAO80531.1"/>
    <property type="molecule type" value="Genomic_DNA"/>
</dbReference>
<dbReference type="PIR" id="A22018">
    <property type="entry name" value="A22018"/>
</dbReference>
<dbReference type="RefSeq" id="NP_814461.1">
    <property type="nucleotide sequence ID" value="NC_004668.1"/>
</dbReference>
<dbReference type="SMR" id="P23530"/>
<dbReference type="STRING" id="226185.EF_0710"/>
<dbReference type="EnsemblBacteria" id="AAO80531">
    <property type="protein sequence ID" value="AAO80531"/>
    <property type="gene ID" value="EF_0710"/>
</dbReference>
<dbReference type="KEGG" id="efa:EF0710"/>
<dbReference type="PATRIC" id="fig|226185.45.peg.2652"/>
<dbReference type="eggNOG" id="COG1080">
    <property type="taxonomic scope" value="Bacteria"/>
</dbReference>
<dbReference type="HOGENOM" id="CLU_007308_7_0_9"/>
<dbReference type="Proteomes" id="UP000001415">
    <property type="component" value="Chromosome"/>
</dbReference>
<dbReference type="GO" id="GO:0005737">
    <property type="term" value="C:cytoplasm"/>
    <property type="evidence" value="ECO:0007669"/>
    <property type="project" value="UniProtKB-SubCell"/>
</dbReference>
<dbReference type="GO" id="GO:0016301">
    <property type="term" value="F:kinase activity"/>
    <property type="evidence" value="ECO:0007669"/>
    <property type="project" value="UniProtKB-KW"/>
</dbReference>
<dbReference type="GO" id="GO:0046872">
    <property type="term" value="F:metal ion binding"/>
    <property type="evidence" value="ECO:0007669"/>
    <property type="project" value="UniProtKB-KW"/>
</dbReference>
<dbReference type="GO" id="GO:0008965">
    <property type="term" value="F:phosphoenolpyruvate-protein phosphotransferase activity"/>
    <property type="evidence" value="ECO:0007669"/>
    <property type="project" value="UniProtKB-EC"/>
</dbReference>
<dbReference type="GO" id="GO:0009401">
    <property type="term" value="P:phosphoenolpyruvate-dependent sugar phosphotransferase system"/>
    <property type="evidence" value="ECO:0007669"/>
    <property type="project" value="UniProtKB-KW"/>
</dbReference>
<dbReference type="FunFam" id="1.10.274.10:FF:000001">
    <property type="entry name" value="Phosphoenolpyruvate-protein phosphotransferase"/>
    <property type="match status" value="1"/>
</dbReference>
<dbReference type="FunFam" id="3.20.20.60:FF:000007">
    <property type="entry name" value="Phosphoenolpyruvate-protein phosphotransferase"/>
    <property type="match status" value="1"/>
</dbReference>
<dbReference type="Gene3D" id="3.20.20.60">
    <property type="entry name" value="Phosphoenolpyruvate-binding domains"/>
    <property type="match status" value="1"/>
</dbReference>
<dbReference type="Gene3D" id="3.50.30.10">
    <property type="entry name" value="Phosphohistidine domain"/>
    <property type="match status" value="1"/>
</dbReference>
<dbReference type="Gene3D" id="1.10.274.10">
    <property type="entry name" value="PtsI, HPr-binding domain"/>
    <property type="match status" value="1"/>
</dbReference>
<dbReference type="InterPro" id="IPR008279">
    <property type="entry name" value="PEP-util_enz_mobile_dom"/>
</dbReference>
<dbReference type="InterPro" id="IPR050499">
    <property type="entry name" value="PEP-utilizing_PTS_enzyme"/>
</dbReference>
<dbReference type="InterPro" id="IPR018274">
    <property type="entry name" value="PEP_util_AS"/>
</dbReference>
<dbReference type="InterPro" id="IPR000121">
    <property type="entry name" value="PEP_util_C"/>
</dbReference>
<dbReference type="InterPro" id="IPR023151">
    <property type="entry name" value="PEP_util_CS"/>
</dbReference>
<dbReference type="InterPro" id="IPR036637">
    <property type="entry name" value="Phosphohistidine_dom_sf"/>
</dbReference>
<dbReference type="InterPro" id="IPR024692">
    <property type="entry name" value="PTS_EI"/>
</dbReference>
<dbReference type="InterPro" id="IPR006318">
    <property type="entry name" value="PTS_EI-like"/>
</dbReference>
<dbReference type="InterPro" id="IPR008731">
    <property type="entry name" value="PTS_EIN"/>
</dbReference>
<dbReference type="InterPro" id="IPR036618">
    <property type="entry name" value="PtsI_HPr-bd_sf"/>
</dbReference>
<dbReference type="InterPro" id="IPR015813">
    <property type="entry name" value="Pyrv/PenolPyrv_kinase-like_dom"/>
</dbReference>
<dbReference type="InterPro" id="IPR040442">
    <property type="entry name" value="Pyrv_kinase-like_dom_sf"/>
</dbReference>
<dbReference type="NCBIfam" id="TIGR01417">
    <property type="entry name" value="PTS_I_fam"/>
    <property type="match status" value="1"/>
</dbReference>
<dbReference type="PANTHER" id="PTHR46244">
    <property type="entry name" value="PHOSPHOENOLPYRUVATE-PROTEIN PHOSPHOTRANSFERASE"/>
    <property type="match status" value="1"/>
</dbReference>
<dbReference type="PANTHER" id="PTHR46244:SF3">
    <property type="entry name" value="PHOSPHOENOLPYRUVATE-PROTEIN PHOSPHOTRANSFERASE"/>
    <property type="match status" value="1"/>
</dbReference>
<dbReference type="Pfam" id="PF05524">
    <property type="entry name" value="PEP-utilisers_N"/>
    <property type="match status" value="1"/>
</dbReference>
<dbReference type="Pfam" id="PF00391">
    <property type="entry name" value="PEP-utilizers"/>
    <property type="match status" value="1"/>
</dbReference>
<dbReference type="Pfam" id="PF02896">
    <property type="entry name" value="PEP-utilizers_C"/>
    <property type="match status" value="1"/>
</dbReference>
<dbReference type="PIRSF" id="PIRSF000732">
    <property type="entry name" value="PTS_enzyme_I"/>
    <property type="match status" value="1"/>
</dbReference>
<dbReference type="PRINTS" id="PR01736">
    <property type="entry name" value="PHPHTRNFRASE"/>
</dbReference>
<dbReference type="SUPFAM" id="SSF47831">
    <property type="entry name" value="Enzyme I of the PEP:sugar phosphotransferase system HPr-binding (sub)domain"/>
    <property type="match status" value="1"/>
</dbReference>
<dbReference type="SUPFAM" id="SSF51621">
    <property type="entry name" value="Phosphoenolpyruvate/pyruvate domain"/>
    <property type="match status" value="1"/>
</dbReference>
<dbReference type="SUPFAM" id="SSF52009">
    <property type="entry name" value="Phosphohistidine domain"/>
    <property type="match status" value="1"/>
</dbReference>
<dbReference type="PROSITE" id="PS00742">
    <property type="entry name" value="PEP_ENZYMES_2"/>
    <property type="match status" value="1"/>
</dbReference>
<dbReference type="PROSITE" id="PS00370">
    <property type="entry name" value="PEP_ENZYMES_PHOS_SITE"/>
    <property type="match status" value="1"/>
</dbReference>
<name>PT1_ENTFA</name>
<comment type="function">
    <text evidence="1 6">General (non sugar-specific) component of the phosphoenolpyruvate-dependent sugar phosphotransferase system (sugar PTS). This major carbohydrate active-transport system catalyzes the phosphorylation of incoming sugar substrates concomitantly with their translocation across the cell membrane. Enzyme I transfers the phosphoryl group from phosphoenolpyruvate (PEP) to the phosphoryl carrier protein (HPr).</text>
</comment>
<comment type="catalytic activity">
    <reaction evidence="1 6">
        <text>L-histidyl-[protein] + phosphoenolpyruvate = N(pros)-phospho-L-histidyl-[protein] + pyruvate</text>
        <dbReference type="Rhea" id="RHEA:23880"/>
        <dbReference type="Rhea" id="RHEA-COMP:9745"/>
        <dbReference type="Rhea" id="RHEA-COMP:9746"/>
        <dbReference type="ChEBI" id="CHEBI:15361"/>
        <dbReference type="ChEBI" id="CHEBI:29979"/>
        <dbReference type="ChEBI" id="CHEBI:58702"/>
        <dbReference type="ChEBI" id="CHEBI:64837"/>
        <dbReference type="EC" id="2.7.3.9"/>
    </reaction>
</comment>
<comment type="cofactor">
    <cofactor evidence="1">
        <name>Mg(2+)</name>
        <dbReference type="ChEBI" id="CHEBI:18420"/>
    </cofactor>
</comment>
<comment type="subunit">
    <text evidence="3">Homodimer.</text>
</comment>
<comment type="subcellular location">
    <subcellularLocation>
        <location evidence="5">Cytoplasm</location>
    </subcellularLocation>
</comment>
<comment type="domain">
    <text evidence="1">The N-terminal domain contains the HPr binding site, the central domain the pyrophosphate/phosphate carrier histidine, and the C-terminal domain the pyruvate binding site.</text>
</comment>
<comment type="miscellaneous">
    <text evidence="1">The reaction takes place in three steps, mediated by a phosphocarrier histidine residue located on the surface of the central domain. The two first partial reactions are catalyzed at an active site located on the N-terminal domain, and the third partial reaction is catalyzed at an active site located on the C-terminal domain. For catalytic turnover, the central domain swivels from the concave surface of the N-terminal domain to that of the C-terminal domain.</text>
</comment>
<comment type="similarity">
    <text evidence="5">Belongs to the PEP-utilizing enzyme family.</text>
</comment>
<evidence type="ECO:0000250" key="1">
    <source>
        <dbReference type="UniProtKB" id="P08839"/>
    </source>
</evidence>
<evidence type="ECO:0000250" key="2">
    <source>
        <dbReference type="UniProtKB" id="P23533"/>
    </source>
</evidence>
<evidence type="ECO:0000269" key="3">
    <source>
    </source>
</evidence>
<evidence type="ECO:0000303" key="4">
    <source>
    </source>
</evidence>
<evidence type="ECO:0000305" key="5"/>
<evidence type="ECO:0000305" key="6">
    <source>
    </source>
</evidence>
<accession>P23530</accession>
<keyword id="KW-0963">Cytoplasm</keyword>
<keyword id="KW-0903">Direct protein sequencing</keyword>
<keyword id="KW-0418">Kinase</keyword>
<keyword id="KW-0460">Magnesium</keyword>
<keyword id="KW-0479">Metal-binding</keyword>
<keyword id="KW-0598">Phosphotransferase system</keyword>
<keyword id="KW-1185">Reference proteome</keyword>
<keyword id="KW-0762">Sugar transport</keyword>
<keyword id="KW-0808">Transferase</keyword>
<keyword id="KW-0813">Transport</keyword>
<proteinExistence type="evidence at protein level"/>
<protein>
    <recommendedName>
        <fullName evidence="4">Phosphoenolpyruvate-protein phosphotransferase</fullName>
        <ecNumber evidence="1 6">2.7.3.9</ecNumber>
    </recommendedName>
    <alternativeName>
        <fullName evidence="4">Phosphotransferase system, enzyme I</fullName>
    </alternativeName>
</protein>
<gene>
    <name type="primary">ptsI</name>
    <name type="ordered locus">EF_0710</name>
</gene>
<reference key="1">
    <citation type="journal article" date="2003" name="Science">
        <title>Role of mobile DNA in the evolution of vancomycin-resistant Enterococcus faecalis.</title>
        <authorList>
            <person name="Paulsen I.T."/>
            <person name="Banerjei L."/>
            <person name="Myers G.S.A."/>
            <person name="Nelson K.E."/>
            <person name="Seshadri R."/>
            <person name="Read T.D."/>
            <person name="Fouts D.E."/>
            <person name="Eisen J.A."/>
            <person name="Gill S.R."/>
            <person name="Heidelberg J.F."/>
            <person name="Tettelin H."/>
            <person name="Dodson R.J."/>
            <person name="Umayam L.A."/>
            <person name="Brinkac L.M."/>
            <person name="Beanan M.J."/>
            <person name="Daugherty S.C."/>
            <person name="DeBoy R.T."/>
            <person name="Durkin S.A."/>
            <person name="Kolonay J.F."/>
            <person name="Madupu R."/>
            <person name="Nelson W.C."/>
            <person name="Vamathevan J.J."/>
            <person name="Tran B."/>
            <person name="Upton J."/>
            <person name="Hansen T."/>
            <person name="Shetty J."/>
            <person name="Khouri H.M."/>
            <person name="Utterback T.R."/>
            <person name="Radune D."/>
            <person name="Ketchum K.A."/>
            <person name="Dougherty B.A."/>
            <person name="Fraser C.M."/>
        </authorList>
    </citation>
    <scope>NUCLEOTIDE SEQUENCE [LARGE SCALE GENOMIC DNA]</scope>
    <source>
        <strain>ATCC 700802 / V583</strain>
    </source>
</reference>
<reference key="2">
    <citation type="journal article" date="1985" name="Biochemistry">
        <title>Phosphoenolpyruvate-dependent protein kinase enzyme I of Streptococcus faecalis: purification and properties of the enzyme and characterization of its active center.</title>
        <authorList>
            <person name="Alpert C.-A."/>
            <person name="Frank R."/>
            <person name="Stueber K."/>
            <person name="Deutscher J."/>
            <person name="Hengstenberg W."/>
        </authorList>
    </citation>
    <scope>PROTEIN SEQUENCE OF 180-208</scope>
    <scope>FUNCTION</scope>
    <scope>CATALYTIC ACTIVITY</scope>
    <scope>ACTIVE SITE HIS-191</scope>
    <scope>SUBUNIT</scope>
</reference>
<sequence>MSEMLKGIAASDGVAVAKAYLLVQPDLSFNKTSVEDTDAEATRLDDALAKSTEELQAIRDKAAQSLGEAEAQVFDAHLMVLSDPEMVGQIKQNIQDNKVNAEAALKEVTDMYIGMFEAMDDNAYMQERAADIRDVAKRILAHLLGVTLPNPSMINEEVIVVAHDLTPSDTAQLDRTYVKAFVTDIGGRTSHSAIMARSLEIPAIVGTKEITDKVKAGDILAVNGIIGDVIIDPTDAEKSEFEAEAKAYADQKAEWDKLKNAETVTADGKHVELAANIGTPKDLEGVHKNGGEAVGLYRTEFLYMDSSDFPTEEDQYQAYKAVLEGMEGKPVVVRTMDIGGDKELPYLTLPHEMNPFLGYRALRISLSELGDGMFRTQMRALLRASVHGNLRIMFPMVATLKEFRAAKAIFEDEKQKLVNEGVEVSNDIQVGIMIEIPAAAVLADKFAKEVDFFSVGTNDLIQYTMAADRMNERVSYLYQPYNPSILRLIKNVIDAAHAEGKWAGMCGEMAGDQTAVPLLLGMGLDEFSMSATSILKTRSLMKRLDTTKMAELADRALKECDTMEEVFALVEEYTK</sequence>
<feature type="chain" id="PRO_0000147068" description="Phosphoenolpyruvate-protein phosphotransferase">
    <location>
        <begin position="1"/>
        <end position="575"/>
    </location>
</feature>
<feature type="active site" description="Tele-phosphohistidine intermediate" evidence="1 6">
    <location>
        <position position="191"/>
    </location>
</feature>
<feature type="active site" description="Proton donor" evidence="1">
    <location>
        <position position="506"/>
    </location>
</feature>
<feature type="binding site" evidence="2">
    <location>
        <position position="298"/>
    </location>
    <ligand>
        <name>phosphoenolpyruvate</name>
        <dbReference type="ChEBI" id="CHEBI:58702"/>
    </ligand>
</feature>
<feature type="binding site" evidence="1">
    <location>
        <position position="334"/>
    </location>
    <ligand>
        <name>phosphoenolpyruvate</name>
        <dbReference type="ChEBI" id="CHEBI:58702"/>
    </ligand>
</feature>
<feature type="binding site" evidence="1">
    <location>
        <position position="435"/>
    </location>
    <ligand>
        <name>Mg(2+)</name>
        <dbReference type="ChEBI" id="CHEBI:18420"/>
    </ligand>
</feature>
<feature type="binding site" evidence="1">
    <location>
        <begin position="458"/>
        <end position="459"/>
    </location>
    <ligand>
        <name>phosphoenolpyruvate</name>
        <dbReference type="ChEBI" id="CHEBI:58702"/>
    </ligand>
</feature>
<feature type="binding site" evidence="1">
    <location>
        <position position="459"/>
    </location>
    <ligand>
        <name>Mg(2+)</name>
        <dbReference type="ChEBI" id="CHEBI:18420"/>
    </ligand>
</feature>
<feature type="binding site" evidence="2">
    <location>
        <position position="469"/>
    </location>
    <ligand>
        <name>phosphoenolpyruvate</name>
        <dbReference type="ChEBI" id="CHEBI:58702"/>
    </ligand>
</feature>
<organism>
    <name type="scientific">Enterococcus faecalis (strain ATCC 700802 / V583)</name>
    <dbReference type="NCBI Taxonomy" id="226185"/>
    <lineage>
        <taxon>Bacteria</taxon>
        <taxon>Bacillati</taxon>
        <taxon>Bacillota</taxon>
        <taxon>Bacilli</taxon>
        <taxon>Lactobacillales</taxon>
        <taxon>Enterococcaceae</taxon>
        <taxon>Enterococcus</taxon>
    </lineage>
</organism>